<gene>
    <name evidence="8" type="primary">glfA</name>
</gene>
<feature type="chain" id="PRO_0000460593" description="UDP-galactopyranose mutase">
    <location>
        <begin position="1"/>
        <end position="510"/>
    </location>
</feature>
<feature type="binding site" evidence="3 4 10 12 13 14 15 17">
    <location>
        <position position="18"/>
    </location>
    <ligand>
        <name>FAD</name>
        <dbReference type="ChEBI" id="CHEBI:57692"/>
    </ligand>
</feature>
<feature type="binding site" evidence="3 4 10 12 13 14 15 17">
    <location>
        <position position="38"/>
    </location>
    <ligand>
        <name>FAD</name>
        <dbReference type="ChEBI" id="CHEBI:57692"/>
    </ligand>
</feature>
<feature type="binding site" evidence="3 4 10 12 13 14 15 17">
    <location>
        <position position="46"/>
    </location>
    <ligand>
        <name>FAD</name>
        <dbReference type="ChEBI" id="CHEBI:57692"/>
    </ligand>
</feature>
<feature type="binding site" evidence="4 17">
    <location>
        <position position="61"/>
    </location>
    <ligand>
        <name>FAD</name>
        <dbReference type="ChEBI" id="CHEBI:57692"/>
    </ligand>
</feature>
<feature type="binding site" evidence="4 15">
    <location>
        <position position="61"/>
    </location>
    <ligand>
        <name>UDP-alpha-D-galactose</name>
        <dbReference type="ChEBI" id="CHEBI:66914"/>
    </ligand>
</feature>
<feature type="binding site" evidence="4 11 15 16">
    <location>
        <position position="62"/>
    </location>
    <ligand>
        <name>UDP-alpha-D-galactose</name>
        <dbReference type="ChEBI" id="CHEBI:66914"/>
    </ligand>
</feature>
<feature type="binding site" evidence="3 4 10 12 13 14 15 17">
    <location>
        <position position="63"/>
    </location>
    <ligand>
        <name>FAD</name>
        <dbReference type="ChEBI" id="CHEBI:57692"/>
    </ligand>
</feature>
<feature type="binding site" evidence="5 33">
    <location>
        <position position="68"/>
    </location>
    <ligand>
        <name>NADH</name>
        <dbReference type="ChEBI" id="CHEBI:57945"/>
    </ligand>
</feature>
<feature type="binding site" evidence="5 32">
    <location>
        <position position="68"/>
    </location>
    <ligand>
        <name>NADPH</name>
        <dbReference type="ChEBI" id="CHEBI:57783"/>
    </ligand>
</feature>
<feature type="binding site" evidence="5 33">
    <location>
        <position position="91"/>
    </location>
    <ligand>
        <name>NADH</name>
        <dbReference type="ChEBI" id="CHEBI:57945"/>
    </ligand>
</feature>
<feature type="binding site" evidence="5 32">
    <location>
        <position position="91"/>
    </location>
    <ligand>
        <name>NADPH</name>
        <dbReference type="ChEBI" id="CHEBI:57783"/>
    </ligand>
</feature>
<feature type="binding site" evidence="5 33">
    <location>
        <position position="93"/>
    </location>
    <ligand>
        <name>NADH</name>
        <dbReference type="ChEBI" id="CHEBI:57945"/>
    </ligand>
</feature>
<feature type="binding site" evidence="5 32">
    <location>
        <position position="93"/>
    </location>
    <ligand>
        <name>NADPH</name>
        <dbReference type="ChEBI" id="CHEBI:57783"/>
    </ligand>
</feature>
<feature type="binding site" evidence="5 32">
    <location>
        <position position="104"/>
    </location>
    <ligand>
        <name>NADPH</name>
        <dbReference type="ChEBI" id="CHEBI:57783"/>
    </ligand>
</feature>
<feature type="binding site" evidence="3 4 11 12 15 16 20">
    <location>
        <position position="104"/>
    </location>
    <ligand>
        <name>UDP-alpha-D-galactose</name>
        <dbReference type="ChEBI" id="CHEBI:66914"/>
    </ligand>
</feature>
<feature type="binding site" evidence="3 4 11 12 15 16 20">
    <location>
        <position position="107"/>
    </location>
    <ligand>
        <name>UDP-alpha-D-galactose</name>
        <dbReference type="ChEBI" id="CHEBI:66914"/>
    </ligand>
</feature>
<feature type="binding site" evidence="4 12 15">
    <location>
        <position position="159"/>
    </location>
    <ligand>
        <name>UDP-alpha-D-galactose</name>
        <dbReference type="ChEBI" id="CHEBI:66914"/>
    </ligand>
</feature>
<feature type="binding site" evidence="4 12 15">
    <location>
        <position position="162"/>
    </location>
    <ligand>
        <name>UDP-alpha-D-galactose</name>
        <dbReference type="ChEBI" id="CHEBI:66914"/>
    </ligand>
</feature>
<feature type="binding site" evidence="3 4 11 12 15 16 20">
    <location>
        <position position="163"/>
    </location>
    <ligand>
        <name>UDP-alpha-D-galactose</name>
        <dbReference type="ChEBI" id="CHEBI:66914"/>
    </ligand>
</feature>
<feature type="binding site" evidence="3 4 11 12 15 16 20">
    <location>
        <position position="167"/>
    </location>
    <ligand>
        <name>UDP-alpha-D-galactose</name>
        <dbReference type="ChEBI" id="CHEBI:66914"/>
    </ligand>
</feature>
<feature type="binding site" evidence="3 4 11 12 15 16 20">
    <location>
        <position position="182"/>
    </location>
    <ligand>
        <name>UDP-alpha-D-galactose</name>
        <dbReference type="ChEBI" id="CHEBI:66914"/>
    </ligand>
</feature>
<feature type="binding site" evidence="5 32">
    <location>
        <position position="203"/>
    </location>
    <ligand>
        <name>NADPH</name>
        <dbReference type="ChEBI" id="CHEBI:57783"/>
    </ligand>
</feature>
<feature type="binding site" evidence="3 4 11 12 15 16 20">
    <location>
        <position position="207"/>
    </location>
    <ligand>
        <name>UDP-alpha-D-galactose</name>
        <dbReference type="ChEBI" id="CHEBI:66914"/>
    </ligand>
</feature>
<feature type="binding site" evidence="3 4 10 12 13 14 15 17">
    <location>
        <position position="242"/>
    </location>
    <ligand>
        <name>FAD</name>
        <dbReference type="ChEBI" id="CHEBI:57692"/>
    </ligand>
</feature>
<feature type="binding site" evidence="5 32">
    <location>
        <position position="315"/>
    </location>
    <ligand>
        <name>NADPH</name>
        <dbReference type="ChEBI" id="CHEBI:57783"/>
    </ligand>
</feature>
<feature type="binding site" evidence="5 32">
    <location>
        <position position="317"/>
    </location>
    <ligand>
        <name>NADPH</name>
        <dbReference type="ChEBI" id="CHEBI:57783"/>
    </ligand>
</feature>
<feature type="binding site" evidence="3 4 12 16 20">
    <location>
        <position position="317"/>
    </location>
    <ligand>
        <name>UDP-alpha-D-galactose</name>
        <dbReference type="ChEBI" id="CHEBI:66914"/>
    </ligand>
</feature>
<feature type="binding site" evidence="4 10 12">
    <location>
        <position position="327"/>
    </location>
    <ligand>
        <name>FAD</name>
        <dbReference type="ChEBI" id="CHEBI:57692"/>
    </ligand>
</feature>
<feature type="binding site" evidence="3 4 11 12 20">
    <location>
        <position position="327"/>
    </location>
    <ligand>
        <name>UDP-alpha-D-galactose</name>
        <dbReference type="ChEBI" id="CHEBI:66914"/>
    </ligand>
</feature>
<feature type="binding site" evidence="5 33">
    <location>
        <position position="419"/>
    </location>
    <ligand>
        <name>NADH</name>
        <dbReference type="ChEBI" id="CHEBI:57945"/>
    </ligand>
</feature>
<feature type="binding site" evidence="5 32">
    <location>
        <position position="419"/>
    </location>
    <ligand>
        <name>NADPH</name>
        <dbReference type="ChEBI" id="CHEBI:57783"/>
    </ligand>
</feature>
<feature type="binding site" evidence="3 4 11 12 15 16 20">
    <location>
        <position position="419"/>
    </location>
    <ligand>
        <name>UDP-alpha-D-galactose</name>
        <dbReference type="ChEBI" id="CHEBI:66914"/>
    </ligand>
</feature>
<feature type="binding site" evidence="3 4 10 12 13 14 15 17">
    <location>
        <position position="447"/>
    </location>
    <ligand>
        <name>FAD</name>
        <dbReference type="ChEBI" id="CHEBI:57692"/>
    </ligand>
</feature>
<feature type="binding site" evidence="5 33">
    <location>
        <position position="447"/>
    </location>
    <ligand>
        <name>NADH</name>
        <dbReference type="ChEBI" id="CHEBI:57945"/>
    </ligand>
</feature>
<feature type="binding site" evidence="5 32">
    <location>
        <position position="447"/>
    </location>
    <ligand>
        <name>NADPH</name>
        <dbReference type="ChEBI" id="CHEBI:57783"/>
    </ligand>
</feature>
<feature type="binding site" evidence="3 4 11 12 15 16 20">
    <location>
        <position position="453"/>
    </location>
    <ligand>
        <name>UDP-alpha-D-galactose</name>
        <dbReference type="ChEBI" id="CHEBI:66914"/>
    </ligand>
</feature>
<feature type="binding site" evidence="3 4 10 12 13 14 15 17">
    <location>
        <position position="456"/>
    </location>
    <ligand>
        <name>FAD</name>
        <dbReference type="ChEBI" id="CHEBI:57692"/>
    </ligand>
</feature>
<feature type="binding site" evidence="3 4 10 12 13 14 15 17">
    <location>
        <position position="457"/>
    </location>
    <ligand>
        <name>FAD</name>
        <dbReference type="ChEBI" id="CHEBI:57692"/>
    </ligand>
</feature>
<feature type="binding site" evidence="5 33">
    <location>
        <position position="457"/>
    </location>
    <ligand>
        <name>NADH</name>
        <dbReference type="ChEBI" id="CHEBI:57945"/>
    </ligand>
</feature>
<feature type="binding site" evidence="5 32">
    <location>
        <position position="457"/>
    </location>
    <ligand>
        <name>NADPH</name>
        <dbReference type="ChEBI" id="CHEBI:57783"/>
    </ligand>
</feature>
<feature type="binding site" evidence="4 12">
    <location>
        <position position="457"/>
    </location>
    <ligand>
        <name>UDP-alpha-D-galactose</name>
        <dbReference type="ChEBI" id="CHEBI:66914"/>
    </ligand>
</feature>
<feature type="binding site" evidence="3 4 10 12 13 14 15 17">
    <location>
        <position position="458"/>
    </location>
    <ligand>
        <name>FAD</name>
        <dbReference type="ChEBI" id="CHEBI:57692"/>
    </ligand>
</feature>
<feature type="binding site" evidence="5 32">
    <location>
        <position position="460"/>
    </location>
    <ligand>
        <name>NADPH</name>
        <dbReference type="ChEBI" id="CHEBI:57783"/>
    </ligand>
</feature>
<feature type="binding site" evidence="3 4 10 12 13 14 15 17">
    <location>
        <position position="461"/>
    </location>
    <ligand>
        <name>FAD</name>
        <dbReference type="ChEBI" id="CHEBI:57692"/>
    </ligand>
</feature>
<feature type="mutagenesis site" description="Lowers the catalytic efficiency." evidence="6">
    <original>F</original>
    <variation>A</variation>
    <location>
        <position position="66"/>
    </location>
</feature>
<feature type="mutagenesis site" description="Lowers the catalytic efficiency by a factor of 125." evidence="5">
    <original>R</original>
    <variation>A</variation>
    <location>
        <position position="91"/>
    </location>
</feature>
<feature type="mutagenesis site" description="Lowers the catalytic efficiency by a factor of 14." evidence="5">
    <original>S</original>
    <variation>A</variation>
    <location>
        <position position="93"/>
    </location>
</feature>
<feature type="mutagenesis site" description="Lowers the catalytic efficiency." evidence="6">
    <original>Y</original>
    <variation>A</variation>
    <location>
        <position position="104"/>
    </location>
</feature>
<feature type="mutagenesis site" description="Lowers the catalytic efficiency." evidence="6">
    <original>Q</original>
    <variation>A</variation>
    <location>
        <position position="107"/>
    </location>
</feature>
<feature type="mutagenesis site" description="Lowers the UDP-galactopyranose binding." evidence="4">
    <original>R</original>
    <variation>A</variation>
    <location>
        <position position="182"/>
    </location>
</feature>
<feature type="mutagenesis site" description="Lowers the catalytic efficiency." evidence="4">
    <original>R</original>
    <variation>K</variation>
    <location>
        <position position="182"/>
    </location>
</feature>
<feature type="mutagenesis site" description="Lowers the catalytic efficiency." evidence="6">
    <original>N</original>
    <variation>A</variation>
    <location>
        <position position="207"/>
    </location>
</feature>
<feature type="mutagenesis site" description="Lowers the catalytic efficiency." evidence="6">
    <original>Y</original>
    <variation>A</variation>
    <location>
        <position position="317"/>
    </location>
</feature>
<feature type="mutagenesis site" description="Abolishes the catalytic activity." evidence="4">
    <original>R</original>
    <variation>A</variation>
    <location>
        <position position="327"/>
    </location>
</feature>
<feature type="mutagenesis site" description="Lowers the catalytic efficiency." evidence="4">
    <original>R</original>
    <variation>K</variation>
    <location>
        <position position="327"/>
    </location>
</feature>
<feature type="mutagenesis site" description="Lowers the catalytic efficiency by a factor of 2000." evidence="5">
    <original>R</original>
    <variation>A</variation>
    <location>
        <position position="447"/>
    </location>
</feature>
<feature type="strand" evidence="38">
    <location>
        <begin position="5"/>
        <end position="7"/>
    </location>
</feature>
<feature type="strand" evidence="38">
    <location>
        <begin position="9"/>
        <end position="13"/>
    </location>
</feature>
<feature type="helix" evidence="38">
    <location>
        <begin position="17"/>
        <end position="29"/>
    </location>
</feature>
<feature type="strand" evidence="38">
    <location>
        <begin position="34"/>
        <end position="42"/>
    </location>
</feature>
<feature type="helix" evidence="38">
    <location>
        <begin position="45"/>
        <end position="47"/>
    </location>
</feature>
<feature type="strand" evidence="38">
    <location>
        <begin position="49"/>
        <end position="51"/>
    </location>
</feature>
<feature type="strand" evidence="38">
    <location>
        <begin position="57"/>
        <end position="61"/>
    </location>
</feature>
<feature type="helix" evidence="38">
    <location>
        <begin position="70"/>
        <end position="79"/>
    </location>
</feature>
<feature type="helix" evidence="38">
    <location>
        <begin position="83"/>
        <end position="85"/>
    </location>
</feature>
<feature type="strand" evidence="38">
    <location>
        <begin position="86"/>
        <end position="90"/>
    </location>
</feature>
<feature type="strand" evidence="38">
    <location>
        <begin position="93"/>
        <end position="97"/>
    </location>
</feature>
<feature type="strand" evidence="38">
    <location>
        <begin position="100"/>
        <end position="105"/>
    </location>
</feature>
<feature type="helix" evidence="38">
    <location>
        <begin position="106"/>
        <end position="112"/>
    </location>
</feature>
<feature type="helix" evidence="38">
    <location>
        <begin position="115"/>
        <end position="134"/>
    </location>
</feature>
<feature type="helix" evidence="38">
    <location>
        <begin position="142"/>
        <end position="157"/>
    </location>
</feature>
<feature type="helix" evidence="38">
    <location>
        <begin position="159"/>
        <end position="167"/>
    </location>
</feature>
<feature type="helix" evidence="38">
    <location>
        <begin position="171"/>
        <end position="173"/>
    </location>
</feature>
<feature type="strand" evidence="35">
    <location>
        <begin position="174"/>
        <end position="176"/>
    </location>
</feature>
<feature type="helix" evidence="38">
    <location>
        <begin position="177"/>
        <end position="179"/>
    </location>
</feature>
<feature type="turn" evidence="39">
    <location>
        <begin position="180"/>
        <end position="182"/>
    </location>
</feature>
<feature type="helix" evidence="38">
    <location>
        <begin position="188"/>
        <end position="197"/>
    </location>
</feature>
<feature type="strand" evidence="38">
    <location>
        <begin position="208"/>
        <end position="216"/>
    </location>
</feature>
<feature type="helix" evidence="38">
    <location>
        <begin position="219"/>
        <end position="227"/>
    </location>
</feature>
<feature type="helix" evidence="38">
    <location>
        <begin position="231"/>
        <end position="233"/>
    </location>
</feature>
<feature type="strand" evidence="38">
    <location>
        <begin position="234"/>
        <end position="237"/>
    </location>
</feature>
<feature type="helix" evidence="38">
    <location>
        <begin position="238"/>
        <end position="240"/>
    </location>
</feature>
<feature type="strand" evidence="38">
    <location>
        <begin position="242"/>
        <end position="246"/>
    </location>
</feature>
<feature type="turn" evidence="38">
    <location>
        <begin position="247"/>
        <end position="250"/>
    </location>
</feature>
<feature type="strand" evidence="38">
    <location>
        <begin position="251"/>
        <end position="254"/>
    </location>
</feature>
<feature type="strand" evidence="38">
    <location>
        <begin position="259"/>
        <end position="261"/>
    </location>
</feature>
<feature type="strand" evidence="38">
    <location>
        <begin position="263"/>
        <end position="267"/>
    </location>
</feature>
<feature type="helix" evidence="38">
    <location>
        <begin position="271"/>
        <end position="278"/>
    </location>
</feature>
<feature type="helix" evidence="38">
    <location>
        <begin position="281"/>
        <end position="288"/>
    </location>
</feature>
<feature type="strand" evidence="38">
    <location>
        <begin position="292"/>
        <end position="305"/>
    </location>
</feature>
<feature type="turn" evidence="38">
    <location>
        <begin position="308"/>
        <end position="312"/>
    </location>
</feature>
<feature type="strand" evidence="38">
    <location>
        <begin position="315"/>
        <end position="317"/>
    </location>
</feature>
<feature type="strand" evidence="36">
    <location>
        <begin position="320"/>
        <end position="324"/>
    </location>
</feature>
<feature type="strand" evidence="38">
    <location>
        <begin position="326"/>
        <end position="330"/>
    </location>
</feature>
<feature type="helix" evidence="38">
    <location>
        <begin position="331"/>
        <end position="333"/>
    </location>
</feature>
<feature type="helix" evidence="38">
    <location>
        <begin position="336"/>
        <end position="338"/>
    </location>
</feature>
<feature type="strand" evidence="37">
    <location>
        <begin position="361"/>
        <end position="363"/>
    </location>
</feature>
<feature type="strand" evidence="38">
    <location>
        <begin position="367"/>
        <end position="377"/>
    </location>
</feature>
<feature type="strand" evidence="34">
    <location>
        <begin position="378"/>
        <end position="380"/>
    </location>
</feature>
<feature type="turn" evidence="38">
    <location>
        <begin position="384"/>
        <end position="386"/>
    </location>
</feature>
<feature type="helix" evidence="38">
    <location>
        <begin position="387"/>
        <end position="397"/>
    </location>
</feature>
<feature type="strand" evidence="38">
    <location>
        <begin position="406"/>
        <end position="420"/>
    </location>
</feature>
<feature type="helix" evidence="38">
    <location>
        <begin position="426"/>
        <end position="439"/>
    </location>
</feature>
<feature type="strand" evidence="38">
    <location>
        <begin position="442"/>
        <end position="444"/>
    </location>
</feature>
<feature type="turn" evidence="38">
    <location>
        <begin position="447"/>
        <end position="450"/>
    </location>
</feature>
<feature type="helix" evidence="38">
    <location>
        <begin position="453"/>
        <end position="455"/>
    </location>
</feature>
<feature type="helix" evidence="38">
    <location>
        <begin position="458"/>
        <end position="474"/>
    </location>
</feature>
<feature type="helix" evidence="38">
    <location>
        <begin position="479"/>
        <end position="482"/>
    </location>
</feature>
<feature type="helix" evidence="38">
    <location>
        <begin position="484"/>
        <end position="488"/>
    </location>
</feature>
<feature type="helix" evidence="38">
    <location>
        <begin position="500"/>
        <end position="506"/>
    </location>
</feature>
<accession>Q4W1X2</accession>
<sequence length="510" mass="56898">MTHPDISVDVLVIGAGPTGLGAAKRLNQIDGPSWMIVDSNETPGGLASTDVTPEGFLYDVGGHVIFSHYKYFDDCLDEALPKEDDWYTHQRISYVRCQGQWVPYPFQNNISMLPKEEQVKCIDGMIDAALEARVANTKPKTFDEWIVRMMGTGIADLFMRPYNFKVWAVPTTKMQCAWLGERVAAPNLKAVTTNVILGKTAGNWGPNATFRFPARGGTGGIWIAVANTLPKEKTRFGEKGKVTKVNANNKTVTLQDGTTIGYKKLVSTMAVDFLAEAMNDQELVGLTKQLFYSSTHVIGVGVRGSRPERIGDKCWLYFPEDNCPFYRATIFSNYSPYNQPEASKKLPTMQLADGSRPQSTEAKEGPYWSIMLEVSESSMKPVNQETILADCIQGLVNTEMLKPTDEIVSTYHRRFDHGYPTPTLEREGALTQILPKLQDKDIWSRGRFGSWRYEVGNQDHSFMLGVEAVDNIVNGAVELTLNYPDFVNGRQNTERRLVDGAQVFAKSKAQ</sequence>
<name>GLFA_ASPFM</name>
<keyword id="KW-0002">3D-structure</keyword>
<keyword id="KW-0961">Cell wall biogenesis/degradation</keyword>
<keyword id="KW-0274">FAD</keyword>
<keyword id="KW-0285">Flavoprotein</keyword>
<keyword id="KW-0413">Isomerase</keyword>
<keyword id="KW-0520">NAD</keyword>
<keyword id="KW-0521">NADP</keyword>
<keyword id="KW-0547">Nucleotide-binding</keyword>
<comment type="function">
    <text evidence="1 2 4 5 6 7">UDP-galactopyranose mutase, key flavoenzyme of galactofuranose metabolism that catalyzes the 6-to-5 ring contraction of UDP-galactopyranose to UDP-galactofuranose, the donor used by various galacto-furanosyltransferases (PubMed:16207086, PubMed:18552284, PubMed:22334662, PubMed:23036087, PubMed:25412209, PubMed:26836146). Controls the biosynthesis of galactomannan and galactofuranose containing glycoconjugates (PubMed:18552284). The flavin functions as nucleophile, forming a flavin-sugar adduct that facilitates galactose-ring opening and contraction (PubMed:26836146). The binding of UDP-galactopyranose induces profound conformational changes in the enzyme and two loops on opposite sides of the active site move toward each other by over 10 Angstroms to cover the substrate and create a closed active site (PubMed:22334662).</text>
</comment>
<comment type="catalytic activity">
    <reaction evidence="1 4 5 6 7">
        <text>UDP-alpha-D-galactose = UDP-alpha-D-galactofuranose</text>
        <dbReference type="Rhea" id="RHEA:24132"/>
        <dbReference type="ChEBI" id="CHEBI:66914"/>
        <dbReference type="ChEBI" id="CHEBI:66915"/>
        <dbReference type="EC" id="5.4.99.9"/>
    </reaction>
</comment>
<comment type="cofactor">
    <cofactor evidence="3 4 5 6 7">
        <name>FAD</name>
        <dbReference type="ChEBI" id="CHEBI:57692"/>
    </cofactor>
    <text evidence="3 4 5 6 7">Binds 1 FAD per subunit.</text>
</comment>
<comment type="biophysicochemical properties">
    <kinetics>
        <KM evidence="4">42.5 uM for UDP-galactopyranose</KM>
    </kinetics>
</comment>
<comment type="subunit">
    <text evidence="3 5">Homotetramer.</text>
</comment>
<comment type="domain">
    <text evidence="4">Contains a flexible loop (loop III) above the si-face of the isoalloxazine ring that changes position depending on the redox state of the flavin cofactor.</text>
</comment>
<comment type="domain">
    <text evidence="4">Residues Arg-182 and Arg-327 play important roles in stabilizing the position of the diphosphates of the nucleotide sugar and help to facilitate the positioning of the galactose moiety for catalysis.</text>
</comment>
<comment type="disruption phenotype">
    <text evidence="2">Exhibits a marked growth defect, reduced cell wall thickness, and leads to the absence of short beta-1,5-linked galactofuranose in the galactomannan and glycoproteins of this mutant (PubMed:18552284). Strongly diminishes conidiationa and increases susceptibility to drugs such as voriconazole and nikkomycin Z (PubMed:18552284). Displays attenuated virulence in a murine model of invasive aspergillosis (PubMed:18552284).</text>
</comment>
<comment type="biotechnology">
    <text evidence="2">The UDP-galactopyranose mutase appears to be an appealing adjunct therapeutic target in combination with other drugs against A.fumigatus. Galactofuranose is absent in humans yet is an essential component of bacterial and fungal cell walls and a cell surface virulence factor in protozoan parasites. Thus, inhibition of galactofuranose biosynthesis is a valid strategy for developing new antimicrobials.</text>
</comment>
<comment type="similarity">
    <text evidence="9">Belongs to the UDP-galactopyranose/dTDP-fucopyranose mutase family.</text>
</comment>
<proteinExistence type="evidence at protein level"/>
<dbReference type="EC" id="5.4.99.9" evidence="1 4 5 6 7"/>
<dbReference type="EMBL" id="AJ871145">
    <property type="protein sequence ID" value="CAI38754.2"/>
    <property type="molecule type" value="mRNA"/>
</dbReference>
<dbReference type="EMBL" id="FJ746724">
    <property type="protein sequence ID" value="ACR56867.1"/>
    <property type="molecule type" value="Genomic_DNA"/>
</dbReference>
<dbReference type="PDB" id="3UKA">
    <property type="method" value="X-ray"/>
    <property type="resolution" value="2.64 A"/>
    <property type="chains" value="A/B/C/D=2-510"/>
</dbReference>
<dbReference type="PDB" id="3UKF">
    <property type="method" value="X-ray"/>
    <property type="resolution" value="2.50 A"/>
    <property type="chains" value="A/B/C/D/E/F/G/H=2-510"/>
</dbReference>
<dbReference type="PDB" id="3UKH">
    <property type="method" value="X-ray"/>
    <property type="resolution" value="2.30 A"/>
    <property type="chains" value="A/B/C/D/E/F/G/H=2-510"/>
</dbReference>
<dbReference type="PDB" id="3UKK">
    <property type="method" value="X-ray"/>
    <property type="resolution" value="2.75 A"/>
    <property type="chains" value="A/B/C/D=2-510"/>
</dbReference>
<dbReference type="PDB" id="3UKL">
    <property type="method" value="X-ray"/>
    <property type="resolution" value="2.63 A"/>
    <property type="chains" value="A/B/C/D/E/F/G/H=2-510"/>
</dbReference>
<dbReference type="PDB" id="3UKP">
    <property type="method" value="X-ray"/>
    <property type="resolution" value="3.10 A"/>
    <property type="chains" value="A/B/C/D/E/F/G/H=2-510"/>
</dbReference>
<dbReference type="PDB" id="3UKQ">
    <property type="method" value="X-ray"/>
    <property type="resolution" value="3.15 A"/>
    <property type="chains" value="A/B/C/D=2-510"/>
</dbReference>
<dbReference type="PDB" id="3UTE">
    <property type="method" value="X-ray"/>
    <property type="resolution" value="2.35 A"/>
    <property type="chains" value="A/B/C/D=1-510"/>
</dbReference>
<dbReference type="PDB" id="3UTF">
    <property type="method" value="X-ray"/>
    <property type="resolution" value="2.25 A"/>
    <property type="chains" value="A/B/C/D=1-510"/>
</dbReference>
<dbReference type="PDB" id="3UTG">
    <property type="method" value="X-ray"/>
    <property type="resolution" value="2.25 A"/>
    <property type="chains" value="A/B/C/D=1-510"/>
</dbReference>
<dbReference type="PDB" id="3UTH">
    <property type="method" value="X-ray"/>
    <property type="resolution" value="2.25 A"/>
    <property type="chains" value="A/B/C/D=1-510"/>
</dbReference>
<dbReference type="PDB" id="4GDE">
    <property type="method" value="X-ray"/>
    <property type="resolution" value="2.20 A"/>
    <property type="chains" value="A/B/C/D=1-510"/>
</dbReference>
<dbReference type="PDB" id="4U8I">
    <property type="method" value="X-ray"/>
    <property type="resolution" value="2.05 A"/>
    <property type="chains" value="A/B/C/D=1-510"/>
</dbReference>
<dbReference type="PDB" id="4U8J">
    <property type="method" value="X-ray"/>
    <property type="resolution" value="2.30 A"/>
    <property type="chains" value="A/B/C/D=1-510"/>
</dbReference>
<dbReference type="PDB" id="4U8K">
    <property type="method" value="X-ray"/>
    <property type="resolution" value="2.20 A"/>
    <property type="chains" value="A/B/C/D=1-510"/>
</dbReference>
<dbReference type="PDB" id="4U8L">
    <property type="method" value="X-ray"/>
    <property type="resolution" value="2.30 A"/>
    <property type="chains" value="A/B/C/D=1-510"/>
</dbReference>
<dbReference type="PDB" id="4U8M">
    <property type="method" value="X-ray"/>
    <property type="resolution" value="2.30 A"/>
    <property type="chains" value="A/B/C/D=1-510"/>
</dbReference>
<dbReference type="PDB" id="4U8N">
    <property type="method" value="X-ray"/>
    <property type="resolution" value="2.30 A"/>
    <property type="chains" value="A/B/C/D=1-510"/>
</dbReference>
<dbReference type="PDB" id="4U8O">
    <property type="method" value="X-ray"/>
    <property type="resolution" value="2.30 A"/>
    <property type="chains" value="A/B/C/D=1-510"/>
</dbReference>
<dbReference type="PDB" id="4U8P">
    <property type="method" value="X-ray"/>
    <property type="resolution" value="2.05 A"/>
    <property type="chains" value="A/B/C/D=1-510"/>
</dbReference>
<dbReference type="PDB" id="4WX1">
    <property type="method" value="X-ray"/>
    <property type="resolution" value="2.20 A"/>
    <property type="chains" value="A/B/C/D=1-510"/>
</dbReference>
<dbReference type="PDB" id="5HHF">
    <property type="method" value="X-ray"/>
    <property type="resolution" value="2.30 A"/>
    <property type="chains" value="A/B/C/D=1-510"/>
</dbReference>
<dbReference type="PDB" id="5VWT">
    <property type="method" value="X-ray"/>
    <property type="resolution" value="2.75 A"/>
    <property type="chains" value="A/B/C/D=1-510"/>
</dbReference>
<dbReference type="PDB" id="5VWU">
    <property type="method" value="X-ray"/>
    <property type="resolution" value="2.75 A"/>
    <property type="chains" value="A/B/C/D=1-510"/>
</dbReference>
<dbReference type="PDBsum" id="3UKA"/>
<dbReference type="PDBsum" id="3UKF"/>
<dbReference type="PDBsum" id="3UKH"/>
<dbReference type="PDBsum" id="3UKK"/>
<dbReference type="PDBsum" id="3UKL"/>
<dbReference type="PDBsum" id="3UKP"/>
<dbReference type="PDBsum" id="3UKQ"/>
<dbReference type="PDBsum" id="3UTE"/>
<dbReference type="PDBsum" id="3UTF"/>
<dbReference type="PDBsum" id="3UTG"/>
<dbReference type="PDBsum" id="3UTH"/>
<dbReference type="PDBsum" id="4GDE"/>
<dbReference type="PDBsum" id="4U8I"/>
<dbReference type="PDBsum" id="4U8J"/>
<dbReference type="PDBsum" id="4U8K"/>
<dbReference type="PDBsum" id="4U8L"/>
<dbReference type="PDBsum" id="4U8M"/>
<dbReference type="PDBsum" id="4U8N"/>
<dbReference type="PDBsum" id="4U8O"/>
<dbReference type="PDBsum" id="4U8P"/>
<dbReference type="PDBsum" id="4WX1"/>
<dbReference type="PDBsum" id="5HHF"/>
<dbReference type="PDBsum" id="5VWT"/>
<dbReference type="PDBsum" id="5VWU"/>
<dbReference type="SMR" id="Q4W1X2"/>
<dbReference type="BioCyc" id="MetaCyc:MONOMER-19121"/>
<dbReference type="BRENDA" id="5.4.99.9">
    <property type="organism ID" value="508"/>
</dbReference>
<dbReference type="EvolutionaryTrace" id="Q4W1X2"/>
<dbReference type="GO" id="GO:0000166">
    <property type="term" value="F:nucleotide binding"/>
    <property type="evidence" value="ECO:0007669"/>
    <property type="project" value="UniProtKB-KW"/>
</dbReference>
<dbReference type="GO" id="GO:0008767">
    <property type="term" value="F:UDP-galactopyranose mutase activity"/>
    <property type="evidence" value="ECO:0007669"/>
    <property type="project" value="UniProtKB-EC"/>
</dbReference>
<dbReference type="GO" id="GO:0071555">
    <property type="term" value="P:cell wall organization"/>
    <property type="evidence" value="ECO:0007669"/>
    <property type="project" value="UniProtKB-KW"/>
</dbReference>
<dbReference type="FunFam" id="3.50.50.60:FF:000220">
    <property type="entry name" value="UDP-galactopyranose mutase"/>
    <property type="match status" value="1"/>
</dbReference>
<dbReference type="Gene3D" id="3.50.50.60">
    <property type="entry name" value="FAD/NAD(P)-binding domain"/>
    <property type="match status" value="1"/>
</dbReference>
<dbReference type="InterPro" id="IPR036188">
    <property type="entry name" value="FAD/NAD-bd_sf"/>
</dbReference>
<dbReference type="PANTHER" id="PTHR43734:SF4">
    <property type="entry name" value="AMINE OXIDASE DOMAIN-CONTAINING PROTEIN"/>
    <property type="match status" value="1"/>
</dbReference>
<dbReference type="PANTHER" id="PTHR43734">
    <property type="entry name" value="PHYTOENE DESATURASE"/>
    <property type="match status" value="1"/>
</dbReference>
<dbReference type="Pfam" id="PF13450">
    <property type="entry name" value="NAD_binding_8"/>
    <property type="match status" value="1"/>
</dbReference>
<dbReference type="SUPFAM" id="SSF51971">
    <property type="entry name" value="Nucleotide-binding domain"/>
    <property type="match status" value="1"/>
</dbReference>
<reference key="1">
    <citation type="journal article" date="2005" name="Biol. Chem.">
        <title>Identification and partial characterization of two eukaryotic UDP-galactopyranose mutases.</title>
        <authorList>
            <person name="Bakker H."/>
            <person name="Kleczka B."/>
            <person name="Gerardy-Schahn R."/>
            <person name="Routier F.H."/>
        </authorList>
    </citation>
    <scope>NUCLEOTIDE SEQUENCE [MRNA]</scope>
    <scope>FUNCTION</scope>
    <scope>CATALYTIC ACTIVITY</scope>
    <source>
        <strain>CBS 144-89</strain>
    </source>
</reference>
<reference key="2">
    <citation type="journal article" date="2008" name="Eukaryot. Cell">
        <title>Contribution of galactofuranose to the virulence of the opportunistic pathogen Aspergillus fumigatus.</title>
        <authorList>
            <person name="Schmalhorst P.S."/>
            <person name="Krappmann S."/>
            <person name="Vervecken W."/>
            <person name="Rohde M."/>
            <person name="Muller M."/>
            <person name="Braus G.H."/>
            <person name="Contreras R."/>
            <person name="Braun A."/>
            <person name="Bakker H."/>
            <person name="Routier F.H."/>
        </authorList>
    </citation>
    <scope>NUCLEOTIDE SEQUENCE [GENOMIC DNA]</scope>
    <scope>FUNCTION</scope>
    <scope>DISRUPTION PHENOTYPE</scope>
    <scope>BIOTECHNOLOGY</scope>
    <source>
        <strain>D141</strain>
    </source>
</reference>
<reference key="3">
    <citation type="submission" date="2009-02" db="EMBL/GenBank/DDBJ databases">
        <authorList>
            <person name="Ishii A."/>
            <person name="Suzuki M."/>
            <person name="Sahara T."/>
            <person name="Takada Y."/>
            <person name="Sasaki S."/>
            <person name="Fukunaga N."/>
        </authorList>
    </citation>
    <scope>NUCLEOTIDE SEQUENCE [GENOMIC DNA]</scope>
    <source>
        <strain>D141</strain>
    </source>
</reference>
<reference evidence="21 32 33" key="4">
    <citation type="journal article" date="2012" name="J. Am. Chem. Soc.">
        <title>Identification of the NAD(P)H binding site of eukaryotic UDP-galactopyranose mutase.</title>
        <authorList>
            <person name="Dhatwalia R."/>
            <person name="Singh H."/>
            <person name="Solano L.M."/>
            <person name="Oppenheimer M."/>
            <person name="Robinson R.M."/>
            <person name="Ellerbrock J.F."/>
            <person name="Sobrado P."/>
            <person name="Tanner J.J."/>
        </authorList>
    </citation>
    <scope>X-RAY CRYSTALLOGRAPHY (2.20 ANGSTROMS) IN COMPLEX WITH NADH AND NADPH</scope>
    <scope>SUBUNIT</scope>
    <scope>FUNCTION</scope>
    <scope>CATALYTIC ACTIVITY</scope>
    <scope>COFACTOR</scope>
    <scope>MUTAGENESIS OF ARG-91; SER-93 AND ARG-447</scope>
</reference>
<reference evidence="17 18 19 20" key="5">
    <citation type="journal article" date="2012" name="J. Biol. Chem.">
        <title>Crystal structures and small-angle x-ray scattering analysis of UDP-galactopyranose mutase from the pathogenic fungus Aspergillus fumigatus.</title>
        <authorList>
            <person name="Dhatwalia R."/>
            <person name="Singh H."/>
            <person name="Oppenheimer M."/>
            <person name="Karr D.B."/>
            <person name="Nix J.C."/>
            <person name="Sobrado P."/>
            <person name="Tanner J.J."/>
        </authorList>
    </citation>
    <scope>X-RAY CRYSTALLOGRAPHY (2.25 ANGSTROMS) IN COMPLEX WITH FAD; UDP AND UDP-ALPHA-D-GALACTOSE</scope>
    <scope>COFACTOR</scope>
    <scope>SUBUNIT</scope>
</reference>
<reference evidence="10 11 12 13 14 15 16" key="6">
    <citation type="journal article" date="2012" name="J. Biol. Chem.">
        <title>Structural insight into the unique substrate binding mechanism and flavin redox state of UDP-galactopyranose mutase from Aspergillus fumigatus.</title>
        <authorList>
            <person name="van Straaten K.E."/>
            <person name="Routier F.H."/>
            <person name="Sanders D.A."/>
        </authorList>
    </citation>
    <scope>X-RAY CRYSTALLOGRAPHY (2.30 ANGSTROMS) OF 2-510 IN COMPLEX WITH FAD; UDP AND UDP-ALPHA-D-GALACTOSE</scope>
    <scope>FUNCTION</scope>
    <scope>COFACTOR</scope>
    <scope>CATALYTIC ACTIVITY</scope>
    <scope>BIOPHYSICOCHEMICAL PROPERTIES</scope>
    <scope>DOMAIN</scope>
    <scope>MUTAGENESIS OF ARG-182 AND ARG-327</scope>
</reference>
<reference evidence="22 23 24 25 26 27 28 29 30" key="7">
    <citation type="journal article" date="2014" name="Biochemistry">
        <title>Contributions of unique active site residues of eukaryotic UDP-galactopyranose mutases to substrate recognition and active site dynamics.</title>
        <authorList>
            <person name="Da Fonseca I."/>
            <person name="Qureshi I.A."/>
            <person name="Mehra-Chaudhary R."/>
            <person name="Kizjakina K."/>
            <person name="Tanner J.J."/>
            <person name="Sobrado P."/>
        </authorList>
    </citation>
    <scope>X-RAY CRYSTALLOGRAPHY (2.05 ANGSTROMS) IN COMPLEX WITH UDP</scope>
    <scope>FUNCTION</scope>
    <scope>CATALYTIC ACTIVITY</scope>
    <scope>COFACTOR</scope>
    <scope>MUTAGENESIS OF PHE-66; TYR-104; GLN-107; ASN-207 AND TYR-317</scope>
</reference>
<reference evidence="31" key="8">
    <citation type="journal article" date="2016" name="Biochemistry">
        <title>In Crystallo capture of a covalent intermediate in the UDP-galactopyranose mutase reaction.</title>
        <authorList>
            <person name="Mehra-Chaudhary R."/>
            <person name="Dai Y."/>
            <person name="Sobrado P."/>
            <person name="Tanner J.J."/>
        </authorList>
    </citation>
    <scope>X-RAY CRYSTALLOGRAPHY (2.30 ANGSTROMS) IN COMPLEX WITH UDP</scope>
    <scope>COFACTOR</scope>
    <scope>FUNCTION</scope>
    <scope>CATALYTIC ACTIVITY</scope>
</reference>
<evidence type="ECO:0000269" key="1">
    <source>
    </source>
</evidence>
<evidence type="ECO:0000269" key="2">
    <source>
    </source>
</evidence>
<evidence type="ECO:0000269" key="3">
    <source>
    </source>
</evidence>
<evidence type="ECO:0000269" key="4">
    <source>
    </source>
</evidence>
<evidence type="ECO:0000269" key="5">
    <source>
    </source>
</evidence>
<evidence type="ECO:0000269" key="6">
    <source>
    </source>
</evidence>
<evidence type="ECO:0000269" key="7">
    <source>
    </source>
</evidence>
<evidence type="ECO:0000303" key="8">
    <source>
    </source>
</evidence>
<evidence type="ECO:0000305" key="9"/>
<evidence type="ECO:0007744" key="10">
    <source>
        <dbReference type="PDB" id="3UKA"/>
    </source>
</evidence>
<evidence type="ECO:0007744" key="11">
    <source>
        <dbReference type="PDB" id="3UKF"/>
    </source>
</evidence>
<evidence type="ECO:0007744" key="12">
    <source>
        <dbReference type="PDB" id="3UKH"/>
    </source>
</evidence>
<evidence type="ECO:0007744" key="13">
    <source>
        <dbReference type="PDB" id="3UKK"/>
    </source>
</evidence>
<evidence type="ECO:0007744" key="14">
    <source>
        <dbReference type="PDB" id="3UKL"/>
    </source>
</evidence>
<evidence type="ECO:0007744" key="15">
    <source>
        <dbReference type="PDB" id="3UKP"/>
    </source>
</evidence>
<evidence type="ECO:0007744" key="16">
    <source>
        <dbReference type="PDB" id="3UKQ"/>
    </source>
</evidence>
<evidence type="ECO:0007744" key="17">
    <source>
        <dbReference type="PDB" id="3UTE"/>
    </source>
</evidence>
<evidence type="ECO:0007744" key="18">
    <source>
        <dbReference type="PDB" id="3UTF"/>
    </source>
</evidence>
<evidence type="ECO:0007744" key="19">
    <source>
        <dbReference type="PDB" id="3UTG"/>
    </source>
</evidence>
<evidence type="ECO:0007744" key="20">
    <source>
        <dbReference type="PDB" id="3UTH"/>
    </source>
</evidence>
<evidence type="ECO:0007744" key="21">
    <source>
        <dbReference type="PDB" id="4GDE"/>
    </source>
</evidence>
<evidence type="ECO:0007744" key="22">
    <source>
        <dbReference type="PDB" id="4U8I"/>
    </source>
</evidence>
<evidence type="ECO:0007744" key="23">
    <source>
        <dbReference type="PDB" id="4U8J"/>
    </source>
</evidence>
<evidence type="ECO:0007744" key="24">
    <source>
        <dbReference type="PDB" id="4U8K"/>
    </source>
</evidence>
<evidence type="ECO:0007744" key="25">
    <source>
        <dbReference type="PDB" id="4U8L"/>
    </source>
</evidence>
<evidence type="ECO:0007744" key="26">
    <source>
        <dbReference type="PDB" id="4U8M"/>
    </source>
</evidence>
<evidence type="ECO:0007744" key="27">
    <source>
        <dbReference type="PDB" id="4U8N"/>
    </source>
</evidence>
<evidence type="ECO:0007744" key="28">
    <source>
        <dbReference type="PDB" id="4U8O"/>
    </source>
</evidence>
<evidence type="ECO:0007744" key="29">
    <source>
        <dbReference type="PDB" id="4U8P"/>
    </source>
</evidence>
<evidence type="ECO:0007744" key="30">
    <source>
        <dbReference type="PDB" id="4WX1"/>
    </source>
</evidence>
<evidence type="ECO:0007744" key="31">
    <source>
        <dbReference type="PDB" id="5HHF"/>
    </source>
</evidence>
<evidence type="ECO:0007744" key="32">
    <source>
        <dbReference type="PDB" id="5VWT"/>
    </source>
</evidence>
<evidence type="ECO:0007744" key="33">
    <source>
        <dbReference type="PDB" id="5VWU"/>
    </source>
</evidence>
<evidence type="ECO:0007829" key="34">
    <source>
        <dbReference type="PDB" id="3UKK"/>
    </source>
</evidence>
<evidence type="ECO:0007829" key="35">
    <source>
        <dbReference type="PDB" id="3UKP"/>
    </source>
</evidence>
<evidence type="ECO:0007829" key="36">
    <source>
        <dbReference type="PDB" id="3UTG"/>
    </source>
</evidence>
<evidence type="ECO:0007829" key="37">
    <source>
        <dbReference type="PDB" id="4GDE"/>
    </source>
</evidence>
<evidence type="ECO:0007829" key="38">
    <source>
        <dbReference type="PDB" id="4U8I"/>
    </source>
</evidence>
<evidence type="ECO:0007829" key="39">
    <source>
        <dbReference type="PDB" id="4WX1"/>
    </source>
</evidence>
<organism>
    <name type="scientific">Aspergillus fumigatus</name>
    <name type="common">Neosartorya fumigata</name>
    <dbReference type="NCBI Taxonomy" id="746128"/>
    <lineage>
        <taxon>Eukaryota</taxon>
        <taxon>Fungi</taxon>
        <taxon>Dikarya</taxon>
        <taxon>Ascomycota</taxon>
        <taxon>Pezizomycotina</taxon>
        <taxon>Eurotiomycetes</taxon>
        <taxon>Eurotiomycetidae</taxon>
        <taxon>Eurotiales</taxon>
        <taxon>Aspergillaceae</taxon>
        <taxon>Aspergillus</taxon>
        <taxon>Aspergillus subgen. Fumigati</taxon>
    </lineage>
</organism>
<protein>
    <recommendedName>
        <fullName evidence="8">UDP-galactopyranose mutase</fullName>
        <shortName evidence="8">UGM</shortName>
        <ecNumber evidence="1 4 5 6 7">5.4.99.9</ecNumber>
    </recommendedName>
</protein>